<keyword id="KW-1185">Reference proteome</keyword>
<protein>
    <recommendedName>
        <fullName>Protein rof</fullName>
    </recommendedName>
</protein>
<reference key="1">
    <citation type="journal article" date="2002" name="Nucleic Acids Res.">
        <title>Genome sequence of Shigella flexneri 2a: insights into pathogenicity through comparison with genomes of Escherichia coli K12 and O157.</title>
        <authorList>
            <person name="Jin Q."/>
            <person name="Yuan Z."/>
            <person name="Xu J."/>
            <person name="Wang Y."/>
            <person name="Shen Y."/>
            <person name="Lu W."/>
            <person name="Wang J."/>
            <person name="Liu H."/>
            <person name="Yang J."/>
            <person name="Yang F."/>
            <person name="Zhang X."/>
            <person name="Zhang J."/>
            <person name="Yang G."/>
            <person name="Wu H."/>
            <person name="Qu D."/>
            <person name="Dong J."/>
            <person name="Sun L."/>
            <person name="Xue Y."/>
            <person name="Zhao A."/>
            <person name="Gao Y."/>
            <person name="Zhu J."/>
            <person name="Kan B."/>
            <person name="Ding K."/>
            <person name="Chen S."/>
            <person name="Cheng H."/>
            <person name="Yao Z."/>
            <person name="He B."/>
            <person name="Chen R."/>
            <person name="Ma D."/>
            <person name="Qiang B."/>
            <person name="Wen Y."/>
            <person name="Hou Y."/>
            <person name="Yu J."/>
        </authorList>
    </citation>
    <scope>NUCLEOTIDE SEQUENCE [LARGE SCALE GENOMIC DNA]</scope>
    <source>
        <strain>301 / Serotype 2a</strain>
    </source>
</reference>
<reference key="2">
    <citation type="journal article" date="2003" name="Infect. Immun.">
        <title>Complete genome sequence and comparative genomics of Shigella flexneri serotype 2a strain 2457T.</title>
        <authorList>
            <person name="Wei J."/>
            <person name="Goldberg M.B."/>
            <person name="Burland V."/>
            <person name="Venkatesan M.M."/>
            <person name="Deng W."/>
            <person name="Fournier G."/>
            <person name="Mayhew G.F."/>
            <person name="Plunkett G. III"/>
            <person name="Rose D.J."/>
            <person name="Darling A."/>
            <person name="Mau B."/>
            <person name="Perna N.T."/>
            <person name="Payne S.M."/>
            <person name="Runyen-Janecky L.J."/>
            <person name="Zhou S."/>
            <person name="Schwartz D.C."/>
            <person name="Blattner F.R."/>
        </authorList>
    </citation>
    <scope>NUCLEOTIDE SEQUENCE [LARGE SCALE GENOMIC DNA]</scope>
    <source>
        <strain>ATCC 700930 / 2457T / Serotype 2a</strain>
    </source>
</reference>
<comment type="function">
    <text evidence="1">Suppresses temperature-sensitive mutations in essential genes by modulating rho-dependent transcription termination.</text>
</comment>
<comment type="sequence caution" evidence="2">
    <conflict type="erroneous initiation">
        <sequence resource="EMBL-CDS" id="AAN41841"/>
    </conflict>
</comment>
<comment type="sequence caution" evidence="2">
    <conflict type="erroneous initiation">
        <sequence resource="EMBL-CDS" id="AAP15722"/>
    </conflict>
</comment>
<accession>P0AFW9</accession>
<accession>P52098</accession>
<accession>P75670</accession>
<accession>Q9WVU2</accession>
<dbReference type="EMBL" id="AE005674">
    <property type="protein sequence ID" value="AAN41841.1"/>
    <property type="status" value="ALT_INIT"/>
    <property type="molecule type" value="Genomic_DNA"/>
</dbReference>
<dbReference type="EMBL" id="AE014073">
    <property type="protein sequence ID" value="AAP15722.1"/>
    <property type="status" value="ALT_INIT"/>
    <property type="molecule type" value="Genomic_DNA"/>
</dbReference>
<dbReference type="SMR" id="P0AFW9"/>
<dbReference type="STRING" id="198214.SF0179"/>
<dbReference type="PaxDb" id="198214-SF0179"/>
<dbReference type="KEGG" id="sfl:SF0179"/>
<dbReference type="KEGG" id="sfx:S0182"/>
<dbReference type="PATRIC" id="fig|198214.7.peg.201"/>
<dbReference type="HOGENOM" id="CLU_176324_0_1_6"/>
<dbReference type="Proteomes" id="UP000001006">
    <property type="component" value="Chromosome"/>
</dbReference>
<dbReference type="Proteomes" id="UP000002673">
    <property type="component" value="Chromosome"/>
</dbReference>
<dbReference type="FunFam" id="2.30.30.400:FF:000001">
    <property type="entry name" value="Rho-dependent transcription termination (ROF)"/>
    <property type="match status" value="1"/>
</dbReference>
<dbReference type="Gene3D" id="2.30.30.400">
    <property type="entry name" value="Rof-like"/>
    <property type="match status" value="1"/>
</dbReference>
<dbReference type="InterPro" id="IPR009778">
    <property type="entry name" value="ROF"/>
</dbReference>
<dbReference type="InterPro" id="IPR038626">
    <property type="entry name" value="Rof-like_sf"/>
</dbReference>
<dbReference type="InterPro" id="IPR023534">
    <property type="entry name" value="Rof/RNase_P-like"/>
</dbReference>
<dbReference type="NCBIfam" id="NF008636">
    <property type="entry name" value="PRK11625.1"/>
    <property type="match status" value="1"/>
</dbReference>
<dbReference type="Pfam" id="PF07073">
    <property type="entry name" value="ROF"/>
    <property type="match status" value="1"/>
</dbReference>
<dbReference type="SUPFAM" id="SSF101744">
    <property type="entry name" value="Rof/RNase P subunit-like"/>
    <property type="match status" value="1"/>
</dbReference>
<evidence type="ECO:0000250" key="1"/>
<evidence type="ECO:0000305" key="2"/>
<name>ROF_SHIFL</name>
<organism>
    <name type="scientific">Shigella flexneri</name>
    <dbReference type="NCBI Taxonomy" id="623"/>
    <lineage>
        <taxon>Bacteria</taxon>
        <taxon>Pseudomonadati</taxon>
        <taxon>Pseudomonadota</taxon>
        <taxon>Gammaproteobacteria</taxon>
        <taxon>Enterobacterales</taxon>
        <taxon>Enterobacteriaceae</taxon>
        <taxon>Shigella</taxon>
    </lineage>
</organism>
<gene>
    <name type="primary">rof</name>
    <name type="ordered locus">SF0179</name>
    <name type="ordered locus">S0182</name>
</gene>
<feature type="chain" id="PRO_0000097398" description="Protein rof">
    <location>
        <begin position="1"/>
        <end position="84"/>
    </location>
</feature>
<sequence>MNDTYQPINCDDYDNLELACQHHLMLTLELKDGEKLQAKASDLVSRKNVEYLVVEAAGETRELRLDKITSFSHPEIGTVVVSES</sequence>
<proteinExistence type="inferred from homology"/>